<organism>
    <name type="scientific">Aspergillus fumigatus (strain CBS 144.89 / FGSC A1163 / CEA10)</name>
    <name type="common">Neosartorya fumigata</name>
    <dbReference type="NCBI Taxonomy" id="451804"/>
    <lineage>
        <taxon>Eukaryota</taxon>
        <taxon>Fungi</taxon>
        <taxon>Dikarya</taxon>
        <taxon>Ascomycota</taxon>
        <taxon>Pezizomycotina</taxon>
        <taxon>Eurotiomycetes</taxon>
        <taxon>Eurotiomycetidae</taxon>
        <taxon>Eurotiales</taxon>
        <taxon>Aspergillaceae</taxon>
        <taxon>Aspergillus</taxon>
        <taxon>Aspergillus subgen. Fumigati</taxon>
    </lineage>
</organism>
<accession>B0Y5Q9</accession>
<sequence length="313" mass="34278">MNSLVATPPVPPHFYEYSRLSSPHPMSTPTHTPINRKRKADDDGNDHDGRMSASPTNSPAFTPRSLPAPRSFKRSRPNVSGRPLSLPRLLETLDTDALRGILRSMCERHPALADEVIHTSPRPSVSSALQVLRNYQSTLQNSFPLGGNPESDYAYNRVRQPLGNLLDALSDFTPHFLPPHETQASVSLSYLDGATDIIHALPRWHSPQNNIERDSAYDEICKAWILVIREAAKRGGGIQLQYGGWDQKLAKHNQNAGGRLQAAVNELGNSLGWMHGPDSQGYGSSTGGDLVSVREQLLSGTYGLGTPVKVGPW</sequence>
<feature type="chain" id="PRO_0000409396" description="Tethering factor for nuclear proteasome sts1">
    <location>
        <begin position="1"/>
        <end position="313"/>
    </location>
</feature>
<feature type="region of interest" description="Disordered" evidence="2">
    <location>
        <begin position="16"/>
        <end position="84"/>
    </location>
</feature>
<feature type="compositionally biased region" description="Low complexity" evidence="2">
    <location>
        <begin position="21"/>
        <end position="33"/>
    </location>
</feature>
<feature type="compositionally biased region" description="Basic and acidic residues" evidence="2">
    <location>
        <begin position="39"/>
        <end position="50"/>
    </location>
</feature>
<comment type="function">
    <text evidence="1">Involved in ubiquitin-mediated protein degradation. Regulatory factor in the ubiquitin/proteasome pathway that controls the turnover of proteasome substrates. Targets proteasomes to the nucleus and facilitates the degradation of nuclear proteins (By similarity).</text>
</comment>
<comment type="subunit">
    <text evidence="1">Binds the proteasome.</text>
</comment>
<comment type="subcellular location">
    <subcellularLocation>
        <location evidence="1">Cytoplasm</location>
    </subcellularLocation>
    <subcellularLocation>
        <location evidence="1">Nucleus</location>
    </subcellularLocation>
</comment>
<comment type="similarity">
    <text evidence="3">Belongs to the cut8/STS1 family.</text>
</comment>
<protein>
    <recommendedName>
        <fullName>Tethering factor for nuclear proteasome sts1</fullName>
    </recommendedName>
</protein>
<dbReference type="EMBL" id="DS499598">
    <property type="protein sequence ID" value="EDP50094.1"/>
    <property type="molecule type" value="Genomic_DNA"/>
</dbReference>
<dbReference type="SMR" id="B0Y5Q9"/>
<dbReference type="EnsemblFungi" id="EDP50094">
    <property type="protein sequence ID" value="EDP50094"/>
    <property type="gene ID" value="AFUB_064260"/>
</dbReference>
<dbReference type="VEuPathDB" id="FungiDB:AFUB_064260"/>
<dbReference type="HOGENOM" id="CLU_033658_0_0_1"/>
<dbReference type="OrthoDB" id="21262at5052"/>
<dbReference type="PhylomeDB" id="B0Y5Q9"/>
<dbReference type="Proteomes" id="UP000001699">
    <property type="component" value="Unassembled WGS sequence"/>
</dbReference>
<dbReference type="GO" id="GO:0005737">
    <property type="term" value="C:cytoplasm"/>
    <property type="evidence" value="ECO:0007669"/>
    <property type="project" value="UniProtKB-SubCell"/>
</dbReference>
<dbReference type="GO" id="GO:0031965">
    <property type="term" value="C:nuclear membrane"/>
    <property type="evidence" value="ECO:0007669"/>
    <property type="project" value="TreeGrafter"/>
</dbReference>
<dbReference type="GO" id="GO:0070628">
    <property type="term" value="F:proteasome binding"/>
    <property type="evidence" value="ECO:0007669"/>
    <property type="project" value="TreeGrafter"/>
</dbReference>
<dbReference type="GO" id="GO:0071630">
    <property type="term" value="P:nuclear protein quality control by the ubiquitin-proteasome system"/>
    <property type="evidence" value="ECO:0007669"/>
    <property type="project" value="InterPro"/>
</dbReference>
<dbReference type="GO" id="GO:0031144">
    <property type="term" value="P:proteasome localization"/>
    <property type="evidence" value="ECO:0007669"/>
    <property type="project" value="InterPro"/>
</dbReference>
<dbReference type="GO" id="GO:0015031">
    <property type="term" value="P:protein transport"/>
    <property type="evidence" value="ECO:0007669"/>
    <property type="project" value="UniProtKB-KW"/>
</dbReference>
<dbReference type="FunFam" id="1.20.58.1590:FF:000001">
    <property type="entry name" value="Tethering factor for nuclear proteasome STS1"/>
    <property type="match status" value="1"/>
</dbReference>
<dbReference type="Gene3D" id="1.20.58.1590">
    <property type="entry name" value="Tethering factor for nuclear proteasome Cut8/Sts1"/>
    <property type="match status" value="1"/>
</dbReference>
<dbReference type="InterPro" id="IPR013868">
    <property type="entry name" value="Cut8/Sts1_fam"/>
</dbReference>
<dbReference type="InterPro" id="IPR038422">
    <property type="entry name" value="Cut8/Sts1_sf"/>
</dbReference>
<dbReference type="PANTHER" id="PTHR28032">
    <property type="entry name" value="FI02826P"/>
    <property type="match status" value="1"/>
</dbReference>
<dbReference type="PANTHER" id="PTHR28032:SF1">
    <property type="entry name" value="FI02826P"/>
    <property type="match status" value="1"/>
</dbReference>
<dbReference type="Pfam" id="PF08559">
    <property type="entry name" value="Cut8"/>
    <property type="match status" value="1"/>
</dbReference>
<proteinExistence type="inferred from homology"/>
<keyword id="KW-0963">Cytoplasm</keyword>
<keyword id="KW-0539">Nucleus</keyword>
<keyword id="KW-0653">Protein transport</keyword>
<keyword id="KW-0813">Transport</keyword>
<reference key="1">
    <citation type="journal article" date="2008" name="PLoS Genet.">
        <title>Genomic islands in the pathogenic filamentous fungus Aspergillus fumigatus.</title>
        <authorList>
            <person name="Fedorova N.D."/>
            <person name="Khaldi N."/>
            <person name="Joardar V.S."/>
            <person name="Maiti R."/>
            <person name="Amedeo P."/>
            <person name="Anderson M.J."/>
            <person name="Crabtree J."/>
            <person name="Silva J.C."/>
            <person name="Badger J.H."/>
            <person name="Albarraq A."/>
            <person name="Angiuoli S."/>
            <person name="Bussey H."/>
            <person name="Bowyer P."/>
            <person name="Cotty P.J."/>
            <person name="Dyer P.S."/>
            <person name="Egan A."/>
            <person name="Galens K."/>
            <person name="Fraser-Liggett C.M."/>
            <person name="Haas B.J."/>
            <person name="Inman J.M."/>
            <person name="Kent R."/>
            <person name="Lemieux S."/>
            <person name="Malavazi I."/>
            <person name="Orvis J."/>
            <person name="Roemer T."/>
            <person name="Ronning C.M."/>
            <person name="Sundaram J.P."/>
            <person name="Sutton G."/>
            <person name="Turner G."/>
            <person name="Venter J.C."/>
            <person name="White O.R."/>
            <person name="Whitty B.R."/>
            <person name="Youngman P."/>
            <person name="Wolfe K.H."/>
            <person name="Goldman G.H."/>
            <person name="Wortman J.R."/>
            <person name="Jiang B."/>
            <person name="Denning D.W."/>
            <person name="Nierman W.C."/>
        </authorList>
    </citation>
    <scope>NUCLEOTIDE SEQUENCE [LARGE SCALE GENOMIC DNA]</scope>
    <source>
        <strain>CBS 144.89 / FGSC A1163 / CEA10</strain>
    </source>
</reference>
<gene>
    <name type="primary">sts1</name>
    <name type="ORF">AFUB_064260</name>
</gene>
<evidence type="ECO:0000250" key="1"/>
<evidence type="ECO:0000256" key="2">
    <source>
        <dbReference type="SAM" id="MobiDB-lite"/>
    </source>
</evidence>
<evidence type="ECO:0000305" key="3"/>
<name>STS1_ASPFC</name>